<accession>P76090</accession>
<accession>Q2MBC6</accession>
<name>YNBA_ECOLI</name>
<reference key="1">
    <citation type="submission" date="1996-05" db="EMBL/GenBank/DDBJ databases">
        <title>Nucleotide sequence of the replication terminus region of Escherichia coli.</title>
        <authorList>
            <person name="Kitakawa M."/>
            <person name="Kasai H."/>
            <person name="Baba T."/>
            <person name="Honjo A."/>
            <person name="Isono K."/>
        </authorList>
    </citation>
    <scope>NUCLEOTIDE SEQUENCE [GENOMIC DNA]</scope>
    <source>
        <strain>K12</strain>
    </source>
</reference>
<reference key="2">
    <citation type="journal article" date="1997" name="Science">
        <title>The complete genome sequence of Escherichia coli K-12.</title>
        <authorList>
            <person name="Blattner F.R."/>
            <person name="Plunkett G. III"/>
            <person name="Bloch C.A."/>
            <person name="Perna N.T."/>
            <person name="Burland V."/>
            <person name="Riley M."/>
            <person name="Collado-Vides J."/>
            <person name="Glasner J.D."/>
            <person name="Rode C.K."/>
            <person name="Mayhew G.F."/>
            <person name="Gregor J."/>
            <person name="Davis N.W."/>
            <person name="Kirkpatrick H.A."/>
            <person name="Goeden M.A."/>
            <person name="Rose D.J."/>
            <person name="Mau B."/>
            <person name="Shao Y."/>
        </authorList>
    </citation>
    <scope>NUCLEOTIDE SEQUENCE [LARGE SCALE GENOMIC DNA]</scope>
    <source>
        <strain>K12 / MG1655 / ATCC 47076</strain>
    </source>
</reference>
<reference key="3">
    <citation type="journal article" date="2006" name="Mol. Syst. Biol.">
        <title>Highly accurate genome sequences of Escherichia coli K-12 strains MG1655 and W3110.</title>
        <authorList>
            <person name="Hayashi K."/>
            <person name="Morooka N."/>
            <person name="Yamamoto Y."/>
            <person name="Fujita K."/>
            <person name="Isono K."/>
            <person name="Choi S."/>
            <person name="Ohtsubo E."/>
            <person name="Baba T."/>
            <person name="Wanner B.L."/>
            <person name="Mori H."/>
            <person name="Horiuchi T."/>
        </authorList>
    </citation>
    <scope>NUCLEOTIDE SEQUENCE [LARGE SCALE GENOMIC DNA]</scope>
    <source>
        <strain>K12 / W3110 / ATCC 27325 / DSM 5911</strain>
    </source>
</reference>
<reference key="4">
    <citation type="journal article" date="2005" name="Science">
        <title>Global topology analysis of the Escherichia coli inner membrane proteome.</title>
        <authorList>
            <person name="Daley D.O."/>
            <person name="Rapp M."/>
            <person name="Granseth E."/>
            <person name="Melen K."/>
            <person name="Drew D."/>
            <person name="von Heijne G."/>
        </authorList>
    </citation>
    <scope>TOPOLOGY [LARGE SCALE ANALYSIS]</scope>
    <source>
        <strain>K12 / MG1655 / ATCC 47076</strain>
    </source>
</reference>
<evidence type="ECO:0000255" key="1"/>
<evidence type="ECO:0000305" key="2"/>
<dbReference type="EMBL" id="D85081">
    <property type="protein sequence ID" value="BAA25405.1"/>
    <property type="status" value="ALT_FRAME"/>
    <property type="molecule type" value="Genomic_DNA"/>
</dbReference>
<dbReference type="EMBL" id="U00096">
    <property type="protein sequence ID" value="AAC74490.2"/>
    <property type="molecule type" value="Genomic_DNA"/>
</dbReference>
<dbReference type="EMBL" id="AP009048">
    <property type="protein sequence ID" value="BAE76430.1"/>
    <property type="molecule type" value="Genomic_DNA"/>
</dbReference>
<dbReference type="PIR" id="C64892">
    <property type="entry name" value="C64892"/>
</dbReference>
<dbReference type="RefSeq" id="NP_415926.4">
    <property type="nucleotide sequence ID" value="NC_000913.3"/>
</dbReference>
<dbReference type="RefSeq" id="WP_000177515.1">
    <property type="nucleotide sequence ID" value="NZ_SSZK01000021.1"/>
</dbReference>
<dbReference type="SMR" id="P76090"/>
<dbReference type="BioGRID" id="4263021">
    <property type="interactions" value="20"/>
</dbReference>
<dbReference type="FunCoup" id="P76090">
    <property type="interactions" value="189"/>
</dbReference>
<dbReference type="STRING" id="511145.b1408"/>
<dbReference type="PaxDb" id="511145-b1408"/>
<dbReference type="EnsemblBacteria" id="AAC74490">
    <property type="protein sequence ID" value="AAC74490"/>
    <property type="gene ID" value="b1408"/>
</dbReference>
<dbReference type="GeneID" id="945973"/>
<dbReference type="KEGG" id="ecj:JW1405"/>
<dbReference type="KEGG" id="eco:b1408"/>
<dbReference type="KEGG" id="ecoc:C3026_08205"/>
<dbReference type="PATRIC" id="fig|1411691.4.peg.863"/>
<dbReference type="EchoBASE" id="EB3511"/>
<dbReference type="eggNOG" id="COG0558">
    <property type="taxonomic scope" value="Bacteria"/>
</dbReference>
<dbReference type="HOGENOM" id="CLU_088602_0_0_6"/>
<dbReference type="InParanoid" id="P76090"/>
<dbReference type="OMA" id="REFGQQS"/>
<dbReference type="OrthoDB" id="1034332at2"/>
<dbReference type="PhylomeDB" id="P76090"/>
<dbReference type="BioCyc" id="EcoCyc:G6727-MONOMER"/>
<dbReference type="PRO" id="PR:P76090"/>
<dbReference type="Proteomes" id="UP000000625">
    <property type="component" value="Chromosome"/>
</dbReference>
<dbReference type="GO" id="GO:0005886">
    <property type="term" value="C:plasma membrane"/>
    <property type="evidence" value="ECO:0000314"/>
    <property type="project" value="EcoCyc"/>
</dbReference>
<dbReference type="GO" id="GO:0016780">
    <property type="term" value="F:phosphotransferase activity, for other substituted phosphate groups"/>
    <property type="evidence" value="ECO:0007669"/>
    <property type="project" value="InterPro"/>
</dbReference>
<dbReference type="GO" id="GO:0008654">
    <property type="term" value="P:phospholipid biosynthetic process"/>
    <property type="evidence" value="ECO:0007669"/>
    <property type="project" value="InterPro"/>
</dbReference>
<dbReference type="FunFam" id="1.20.120.1760:FF:000018">
    <property type="entry name" value="CDP-alcohol phosphatidyltransferase family protein"/>
    <property type="match status" value="1"/>
</dbReference>
<dbReference type="Gene3D" id="1.20.120.1760">
    <property type="match status" value="1"/>
</dbReference>
<dbReference type="InterPro" id="IPR000462">
    <property type="entry name" value="CDP-OH_P_trans"/>
</dbReference>
<dbReference type="InterPro" id="IPR043130">
    <property type="entry name" value="CDP-OH_PTrfase_TM_dom"/>
</dbReference>
<dbReference type="Pfam" id="PF01066">
    <property type="entry name" value="CDP-OH_P_transf"/>
    <property type="match status" value="1"/>
</dbReference>
<organism>
    <name type="scientific">Escherichia coli (strain K12)</name>
    <dbReference type="NCBI Taxonomy" id="83333"/>
    <lineage>
        <taxon>Bacteria</taxon>
        <taxon>Pseudomonadati</taxon>
        <taxon>Pseudomonadota</taxon>
        <taxon>Gammaproteobacteria</taxon>
        <taxon>Enterobacterales</taxon>
        <taxon>Enterobacteriaceae</taxon>
        <taxon>Escherichia</taxon>
    </lineage>
</organism>
<sequence>MTLYQIKPLFQSLLRPTMFWLYKHHVTANHITLAALALSLLTGLLLMLAAQPILFLLLPIVLFIRMALNALDGMLARECNQQTRLGAILNETGDVISDIALYLPFLFLPESNASLVILMLFCTILTEFCGLLAQTINGVRSYAGPFGKSDRALIFGLWGLAVAIYPQWMQWNNLLWSIASILLLWTAINRCRSVLLMSAEI</sequence>
<proteinExistence type="evidence at protein level"/>
<gene>
    <name type="primary">ynbA</name>
    <name type="ordered locus">b1408</name>
    <name type="ordered locus">JW1405</name>
</gene>
<protein>
    <recommendedName>
        <fullName>Inner membrane protein YnbA</fullName>
    </recommendedName>
</protein>
<keyword id="KW-0997">Cell inner membrane</keyword>
<keyword id="KW-1003">Cell membrane</keyword>
<keyword id="KW-0472">Membrane</keyword>
<keyword id="KW-1185">Reference proteome</keyword>
<keyword id="KW-0812">Transmembrane</keyword>
<keyword id="KW-1133">Transmembrane helix</keyword>
<feature type="chain" id="PRO_0000201335" description="Inner membrane protein YnbA">
    <location>
        <begin position="1"/>
        <end position="201"/>
    </location>
</feature>
<feature type="topological domain" description="Periplasmic" evidence="1">
    <location>
        <begin position="1"/>
        <end position="43"/>
    </location>
</feature>
<feature type="transmembrane region" description="Helical" evidence="1">
    <location>
        <begin position="44"/>
        <end position="64"/>
    </location>
</feature>
<feature type="topological domain" description="Cytoplasmic" evidence="1">
    <location>
        <begin position="65"/>
        <end position="84"/>
    </location>
</feature>
<feature type="transmembrane region" description="Helical" evidence="1">
    <location>
        <begin position="85"/>
        <end position="107"/>
    </location>
</feature>
<feature type="topological domain" description="Periplasmic" evidence="1">
    <location>
        <begin position="108"/>
        <end position="116"/>
    </location>
</feature>
<feature type="transmembrane region" description="Helical" evidence="1">
    <location>
        <begin position="117"/>
        <end position="139"/>
    </location>
</feature>
<feature type="topological domain" description="Cytoplasmic" evidence="1">
    <location>
        <begin position="140"/>
        <end position="151"/>
    </location>
</feature>
<feature type="transmembrane region" description="Helical" evidence="1">
    <location>
        <begin position="152"/>
        <end position="172"/>
    </location>
</feature>
<feature type="topological domain" description="Periplasmic" evidence="1">
    <location>
        <begin position="173"/>
        <end position="175"/>
    </location>
</feature>
<feature type="transmembrane region" description="Helical" evidence="1">
    <location>
        <begin position="176"/>
        <end position="196"/>
    </location>
</feature>
<feature type="topological domain" description="Cytoplasmic" evidence="1">
    <location>
        <begin position="197"/>
        <end position="201"/>
    </location>
</feature>
<comment type="subcellular location">
    <subcellularLocation>
        <location>Cell inner membrane</location>
        <topology>Multi-pass membrane protein</topology>
    </subcellularLocation>
</comment>
<comment type="sequence caution" evidence="2">
    <conflict type="frameshift">
        <sequence resource="EMBL-CDS" id="BAA25405"/>
    </conflict>
</comment>